<proteinExistence type="evidence at protein level"/>
<organism>
    <name type="scientific">Martes martes</name>
    <name type="common">European pine marten</name>
    <dbReference type="NCBI Taxonomy" id="29065"/>
    <lineage>
        <taxon>Eukaryota</taxon>
        <taxon>Metazoa</taxon>
        <taxon>Chordata</taxon>
        <taxon>Craniata</taxon>
        <taxon>Vertebrata</taxon>
        <taxon>Euteleostomi</taxon>
        <taxon>Mammalia</taxon>
        <taxon>Eutheria</taxon>
        <taxon>Laurasiatheria</taxon>
        <taxon>Carnivora</taxon>
        <taxon>Caniformia</taxon>
        <taxon>Musteloidea</taxon>
        <taxon>Mustelidae</taxon>
        <taxon>Guloninae</taxon>
        <taxon>Martes</taxon>
    </lineage>
</organism>
<accession>P81482</accession>
<comment type="function">
    <text>This inhibitor is composed of two homologous actively inhibiting halves: one which inhibits trypsin, the other which inhibits elastase.</text>
</comment>
<comment type="subcellular location">
    <subcellularLocation>
        <location>Secreted</location>
    </subcellularLocation>
</comment>
<sequence length="122" mass="13444">APPPVGDQAGGRKVDCFKYNTTGSAFACTRHERPVCGTDHRTYSNECMFCMLTQNKGFGVRILQDNECDIECTQYSDMCTMEYLPLCGSDGKNYSNKCLFCNAVMGSRGALFLAKHGQCQSP</sequence>
<dbReference type="SMR" id="P81482"/>
<dbReference type="MEROPS" id="I01.016"/>
<dbReference type="MEROPS" id="I01.017"/>
<dbReference type="GO" id="GO:0005576">
    <property type="term" value="C:extracellular region"/>
    <property type="evidence" value="ECO:0007669"/>
    <property type="project" value="UniProtKB-SubCell"/>
</dbReference>
<dbReference type="GO" id="GO:0004867">
    <property type="term" value="F:serine-type endopeptidase inhibitor activity"/>
    <property type="evidence" value="ECO:0007669"/>
    <property type="project" value="UniProtKB-KW"/>
</dbReference>
<dbReference type="CDD" id="cd00104">
    <property type="entry name" value="KAZAL_FS"/>
    <property type="match status" value="1"/>
</dbReference>
<dbReference type="FunFam" id="3.30.60.30:FF:000037">
    <property type="entry name" value="Ovomucoid"/>
    <property type="match status" value="1"/>
</dbReference>
<dbReference type="Gene3D" id="3.30.60.30">
    <property type="match status" value="2"/>
</dbReference>
<dbReference type="InterPro" id="IPR051597">
    <property type="entry name" value="Bifunctional_prot_inhibitor"/>
</dbReference>
<dbReference type="InterPro" id="IPR002350">
    <property type="entry name" value="Kazal_dom"/>
</dbReference>
<dbReference type="InterPro" id="IPR036058">
    <property type="entry name" value="Kazal_dom_sf"/>
</dbReference>
<dbReference type="InterPro" id="IPR001239">
    <property type="entry name" value="Prot_inh_Kazal-m"/>
</dbReference>
<dbReference type="PANTHER" id="PTHR47729:SF1">
    <property type="entry name" value="OVOMUCOID-LIKE-RELATED"/>
    <property type="match status" value="1"/>
</dbReference>
<dbReference type="PANTHER" id="PTHR47729">
    <property type="entry name" value="SERINE PEPTIDASE INHIBITOR, KAZAL TYPE 2, TANDEM DUPLICATE 1-RELATED"/>
    <property type="match status" value="1"/>
</dbReference>
<dbReference type="Pfam" id="PF00050">
    <property type="entry name" value="Kazal_1"/>
    <property type="match status" value="2"/>
</dbReference>
<dbReference type="PRINTS" id="PR00290">
    <property type="entry name" value="KAZALINHBTR"/>
</dbReference>
<dbReference type="SMART" id="SM00280">
    <property type="entry name" value="KAZAL"/>
    <property type="match status" value="2"/>
</dbReference>
<dbReference type="SUPFAM" id="SSF100895">
    <property type="entry name" value="Kazal-type serine protease inhibitors"/>
    <property type="match status" value="2"/>
</dbReference>
<dbReference type="PROSITE" id="PS00282">
    <property type="entry name" value="KAZAL_1"/>
    <property type="match status" value="2"/>
</dbReference>
<dbReference type="PROSITE" id="PS51465">
    <property type="entry name" value="KAZAL_2"/>
    <property type="match status" value="2"/>
</dbReference>
<name>IPSG_MARMT</name>
<reference key="1">
    <citation type="journal article" date="1993" name="Comp. Biochem. Physiol.">
        <title>Amino acid sequences of mammalian kazal-type proteinase inhibitors from salivary glands.</title>
        <authorList>
            <person name="Hochstrasser K."/>
            <person name="Wachter E."/>
            <person name="Reisinger P.W.M."/>
            <person name="Greim M."/>
            <person name="Albrecht G.J."/>
            <person name="Gebhard W."/>
        </authorList>
    </citation>
    <scope>PROTEIN SEQUENCE</scope>
</reference>
<evidence type="ECO:0000255" key="1">
    <source>
        <dbReference type="PROSITE-ProRule" id="PRU00798"/>
    </source>
</evidence>
<protein>
    <recommendedName>
        <fullName>Double-headed protease inhibitor, submandibular gland</fullName>
    </recommendedName>
</protein>
<feature type="chain" id="PRO_0000073037" description="Double-headed protease inhibitor, submandibular gland">
    <location>
        <begin position="1"/>
        <end position="122"/>
    </location>
</feature>
<feature type="domain" description="Kazal-like 1" evidence="1">
    <location>
        <begin position="10"/>
        <end position="70"/>
    </location>
</feature>
<feature type="domain" description="Kazal-like 2" evidence="1">
    <location>
        <begin position="71"/>
        <end position="121"/>
    </location>
</feature>
<feature type="site" description="Reactive bond 1 for trypsin">
    <location>
        <begin position="30"/>
        <end position="31"/>
    </location>
</feature>
<feature type="site" description="Reactive bond 2 for elastase">
    <location>
        <begin position="81"/>
        <end position="82"/>
    </location>
</feature>
<feature type="disulfide bond" evidence="1">
    <location>
        <begin position="16"/>
        <end position="50"/>
    </location>
</feature>
<feature type="disulfide bond" evidence="1">
    <location>
        <begin position="28"/>
        <end position="47"/>
    </location>
</feature>
<feature type="disulfide bond" evidence="1">
    <location>
        <begin position="36"/>
        <end position="68"/>
    </location>
</feature>
<feature type="disulfide bond" evidence="1">
    <location>
        <begin position="72"/>
        <end position="101"/>
    </location>
</feature>
<feature type="disulfide bond" evidence="1">
    <location>
        <begin position="79"/>
        <end position="98"/>
    </location>
</feature>
<feature type="disulfide bond" evidence="1">
    <location>
        <begin position="87"/>
        <end position="119"/>
    </location>
</feature>
<keyword id="KW-0903">Direct protein sequencing</keyword>
<keyword id="KW-1015">Disulfide bond</keyword>
<keyword id="KW-0646">Protease inhibitor</keyword>
<keyword id="KW-0677">Repeat</keyword>
<keyword id="KW-0964">Secreted</keyword>
<keyword id="KW-0722">Serine protease inhibitor</keyword>